<gene>
    <name evidence="1" type="primary">hutG</name>
    <name type="ordered locus">SE_1907</name>
</gene>
<protein>
    <recommendedName>
        <fullName evidence="1">Formimidoylglutamase</fullName>
        <ecNumber evidence="1">3.5.3.8</ecNumber>
    </recommendedName>
    <alternativeName>
        <fullName evidence="1">Formiminoglutamase</fullName>
    </alternativeName>
    <alternativeName>
        <fullName evidence="1">Formiminoglutamate hydrolase</fullName>
    </alternativeName>
</protein>
<organism>
    <name type="scientific">Staphylococcus epidermidis (strain ATCC 12228 / FDA PCI 1200)</name>
    <dbReference type="NCBI Taxonomy" id="176280"/>
    <lineage>
        <taxon>Bacteria</taxon>
        <taxon>Bacillati</taxon>
        <taxon>Bacillota</taxon>
        <taxon>Bacilli</taxon>
        <taxon>Bacillales</taxon>
        <taxon>Staphylococcaceae</taxon>
        <taxon>Staphylococcus</taxon>
    </lineage>
</organism>
<dbReference type="EC" id="3.5.3.8" evidence="1"/>
<dbReference type="EMBL" id="AE015929">
    <property type="protein sequence ID" value="AAO05548.1"/>
    <property type="molecule type" value="Genomic_DNA"/>
</dbReference>
<dbReference type="RefSeq" id="NP_765462.1">
    <property type="nucleotide sequence ID" value="NC_004461.1"/>
</dbReference>
<dbReference type="RefSeq" id="WP_001831441.1">
    <property type="nucleotide sequence ID" value="NZ_WBME01000027.1"/>
</dbReference>
<dbReference type="SMR" id="Q8CNA3"/>
<dbReference type="GeneID" id="50017990"/>
<dbReference type="KEGG" id="sep:SE_1907"/>
<dbReference type="PATRIC" id="fig|176280.10.peg.1866"/>
<dbReference type="eggNOG" id="COG0010">
    <property type="taxonomic scope" value="Bacteria"/>
</dbReference>
<dbReference type="HOGENOM" id="CLU_039478_2_0_9"/>
<dbReference type="OrthoDB" id="9788689at2"/>
<dbReference type="UniPathway" id="UPA00379">
    <property type="reaction ID" value="UER00552"/>
</dbReference>
<dbReference type="Proteomes" id="UP000001411">
    <property type="component" value="Chromosome"/>
</dbReference>
<dbReference type="GO" id="GO:0008783">
    <property type="term" value="F:agmatinase activity"/>
    <property type="evidence" value="ECO:0007669"/>
    <property type="project" value="TreeGrafter"/>
</dbReference>
<dbReference type="GO" id="GO:0050415">
    <property type="term" value="F:formimidoylglutamase activity"/>
    <property type="evidence" value="ECO:0007669"/>
    <property type="project" value="UniProtKB-UniRule"/>
</dbReference>
<dbReference type="GO" id="GO:0030145">
    <property type="term" value="F:manganese ion binding"/>
    <property type="evidence" value="ECO:0007669"/>
    <property type="project" value="UniProtKB-UniRule"/>
</dbReference>
<dbReference type="GO" id="GO:0019556">
    <property type="term" value="P:L-histidine catabolic process to glutamate and formamide"/>
    <property type="evidence" value="ECO:0007669"/>
    <property type="project" value="UniProtKB-UniPathway"/>
</dbReference>
<dbReference type="GO" id="GO:0019557">
    <property type="term" value="P:L-histidine catabolic process to glutamate and formate"/>
    <property type="evidence" value="ECO:0007669"/>
    <property type="project" value="UniProtKB-UniPathway"/>
</dbReference>
<dbReference type="GO" id="GO:0033389">
    <property type="term" value="P:putrescine biosynthetic process from arginine, via agmatine"/>
    <property type="evidence" value="ECO:0007669"/>
    <property type="project" value="TreeGrafter"/>
</dbReference>
<dbReference type="CDD" id="cd09988">
    <property type="entry name" value="Formimidoylglutamase"/>
    <property type="match status" value="1"/>
</dbReference>
<dbReference type="Gene3D" id="3.40.800.10">
    <property type="entry name" value="Ureohydrolase domain"/>
    <property type="match status" value="1"/>
</dbReference>
<dbReference type="HAMAP" id="MF_00737">
    <property type="entry name" value="Formimidoylglutam"/>
    <property type="match status" value="1"/>
</dbReference>
<dbReference type="InterPro" id="IPR005923">
    <property type="entry name" value="HutG"/>
</dbReference>
<dbReference type="InterPro" id="IPR006035">
    <property type="entry name" value="Ureohydrolase"/>
</dbReference>
<dbReference type="InterPro" id="IPR023696">
    <property type="entry name" value="Ureohydrolase_dom_sf"/>
</dbReference>
<dbReference type="NCBIfam" id="TIGR01227">
    <property type="entry name" value="hutG"/>
    <property type="match status" value="1"/>
</dbReference>
<dbReference type="PANTHER" id="PTHR11358">
    <property type="entry name" value="ARGINASE/AGMATINASE"/>
    <property type="match status" value="1"/>
</dbReference>
<dbReference type="PANTHER" id="PTHR11358:SF35">
    <property type="entry name" value="FORMIMIDOYLGLUTAMASE"/>
    <property type="match status" value="1"/>
</dbReference>
<dbReference type="Pfam" id="PF00491">
    <property type="entry name" value="Arginase"/>
    <property type="match status" value="1"/>
</dbReference>
<dbReference type="PIRSF" id="PIRSF036979">
    <property type="entry name" value="Arginase"/>
    <property type="match status" value="1"/>
</dbReference>
<dbReference type="SUPFAM" id="SSF52768">
    <property type="entry name" value="Arginase/deacetylase"/>
    <property type="match status" value="1"/>
</dbReference>
<dbReference type="PROSITE" id="PS51409">
    <property type="entry name" value="ARGINASE_2"/>
    <property type="match status" value="1"/>
</dbReference>
<proteinExistence type="inferred from homology"/>
<name>HUTG_STAES</name>
<keyword id="KW-0369">Histidine metabolism</keyword>
<keyword id="KW-0378">Hydrolase</keyword>
<keyword id="KW-0464">Manganese</keyword>
<keyword id="KW-0479">Metal-binding</keyword>
<comment type="function">
    <text evidence="1">Catalyzes the conversion of N-formimidoyl-L-glutamate to L-glutamate and formamide.</text>
</comment>
<comment type="catalytic activity">
    <reaction evidence="1">
        <text>N-formimidoyl-L-glutamate + H2O = formamide + L-glutamate</text>
        <dbReference type="Rhea" id="RHEA:22492"/>
        <dbReference type="ChEBI" id="CHEBI:15377"/>
        <dbReference type="ChEBI" id="CHEBI:16397"/>
        <dbReference type="ChEBI" id="CHEBI:29985"/>
        <dbReference type="ChEBI" id="CHEBI:58928"/>
        <dbReference type="EC" id="3.5.3.8"/>
    </reaction>
</comment>
<comment type="cofactor">
    <cofactor evidence="1">
        <name>Mn(2+)</name>
        <dbReference type="ChEBI" id="CHEBI:29035"/>
    </cofactor>
    <text evidence="1">Binds 2 manganese ions per subunit.</text>
</comment>
<comment type="pathway">
    <text evidence="1">Amino-acid degradation; L-histidine degradation into L-glutamate; L-glutamate from N-formimidoyl-L-glutamate (hydrolase route): step 1/1.</text>
</comment>
<comment type="similarity">
    <text evidence="1">Belongs to the arginase family.</text>
</comment>
<evidence type="ECO:0000255" key="1">
    <source>
        <dbReference type="HAMAP-Rule" id="MF_00737"/>
    </source>
</evidence>
<accession>Q8CNA3</accession>
<feature type="chain" id="PRO_0000173772" description="Formimidoylglutamase">
    <location>
        <begin position="1"/>
        <end position="311"/>
    </location>
</feature>
<feature type="binding site" evidence="1">
    <location>
        <position position="130"/>
    </location>
    <ligand>
        <name>Mn(2+)</name>
        <dbReference type="ChEBI" id="CHEBI:29035"/>
        <label>1</label>
    </ligand>
</feature>
<feature type="binding site" evidence="1">
    <location>
        <position position="155"/>
    </location>
    <ligand>
        <name>Mn(2+)</name>
        <dbReference type="ChEBI" id="CHEBI:29035"/>
        <label>1</label>
    </ligand>
</feature>
<feature type="binding site" evidence="1">
    <location>
        <position position="155"/>
    </location>
    <ligand>
        <name>Mn(2+)</name>
        <dbReference type="ChEBI" id="CHEBI:29035"/>
        <label>2</label>
    </ligand>
</feature>
<feature type="binding site" evidence="1">
    <location>
        <position position="157"/>
    </location>
    <ligand>
        <name>Mn(2+)</name>
        <dbReference type="ChEBI" id="CHEBI:29035"/>
        <label>2</label>
    </ligand>
</feature>
<feature type="binding site" evidence="1">
    <location>
        <position position="159"/>
    </location>
    <ligand>
        <name>Mn(2+)</name>
        <dbReference type="ChEBI" id="CHEBI:29035"/>
        <label>1</label>
    </ligand>
</feature>
<feature type="binding site" evidence="1">
    <location>
        <position position="242"/>
    </location>
    <ligand>
        <name>Mn(2+)</name>
        <dbReference type="ChEBI" id="CHEBI:29035"/>
        <label>1</label>
    </ligand>
</feature>
<feature type="binding site" evidence="1">
    <location>
        <position position="242"/>
    </location>
    <ligand>
        <name>Mn(2+)</name>
        <dbReference type="ChEBI" id="CHEBI:29035"/>
        <label>2</label>
    </ligand>
</feature>
<feature type="binding site" evidence="1">
    <location>
        <position position="244"/>
    </location>
    <ligand>
        <name>Mn(2+)</name>
        <dbReference type="ChEBI" id="CHEBI:29035"/>
        <label>2</label>
    </ligand>
</feature>
<sequence>MYQLAQSNLWTGRLDSETDPTQFRHFQTVKFGDLSQLDFSDEHKGVGLLGYAIDKGVELNKGRVGAKEGPNAIKRAFAGLPDLNQCEEIIDYGNVEHNHELLIDTQREFADLAAKSIKRHKQTFLLGGGHDIAYAQYLATRKVYPESSIGVINIDAHFDTRDEGYSTSGTSFRQILEEDDNADYLVLGISQGGNTQALFNYAKEKDIQFVYADELLHQVSPPIKDMIERFIHNHDTVMFTICMDVVDSAFAPGVSAPAVLGIYPHTVFELAKRVIPSEKVKSISIAEMNPTYDSDQRTAKLVANLVHHCLI</sequence>
<reference key="1">
    <citation type="journal article" date="2003" name="Mol. Microbiol.">
        <title>Genome-based analysis of virulence genes in a non-biofilm-forming Staphylococcus epidermidis strain (ATCC 12228).</title>
        <authorList>
            <person name="Zhang Y.-Q."/>
            <person name="Ren S.-X."/>
            <person name="Li H.-L."/>
            <person name="Wang Y.-X."/>
            <person name="Fu G."/>
            <person name="Yang J."/>
            <person name="Qin Z.-Q."/>
            <person name="Miao Y.-G."/>
            <person name="Wang W.-Y."/>
            <person name="Chen R.-S."/>
            <person name="Shen Y."/>
            <person name="Chen Z."/>
            <person name="Yuan Z.-H."/>
            <person name="Zhao G.-P."/>
            <person name="Qu D."/>
            <person name="Danchin A."/>
            <person name="Wen Y.-M."/>
        </authorList>
    </citation>
    <scope>NUCLEOTIDE SEQUENCE [LARGE SCALE GENOMIC DNA]</scope>
    <source>
        <strain>ATCC 12228 / FDA PCI 1200</strain>
    </source>
</reference>